<protein>
    <recommendedName>
        <fullName>Serine protease inhibitor</fullName>
    </recommendedName>
</protein>
<evidence type="ECO:0000269" key="1">
    <source>
    </source>
</evidence>
<evidence type="ECO:0000305" key="2"/>
<dbReference type="SMR" id="P81639"/>
<dbReference type="MEROPS" id="I66.001"/>
<dbReference type="iPTMnet" id="P81639"/>
<dbReference type="GO" id="GO:0004867">
    <property type="term" value="F:serine-type endopeptidase inhibitor activity"/>
    <property type="evidence" value="ECO:0007669"/>
    <property type="project" value="UniProtKB-KW"/>
</dbReference>
<dbReference type="CDD" id="cd23428">
    <property type="entry name" value="beta-trefoil_Ricin_SPI"/>
    <property type="match status" value="1"/>
</dbReference>
<dbReference type="Gene3D" id="2.80.10.50">
    <property type="match status" value="1"/>
</dbReference>
<dbReference type="InterPro" id="IPR031755">
    <property type="entry name" value="Inhibitor_I66"/>
</dbReference>
<dbReference type="Pfam" id="PF16850">
    <property type="entry name" value="Inhibitor_I66"/>
    <property type="match status" value="1"/>
</dbReference>
<comment type="function">
    <text evidence="1">Serine protease inhibitor. Active against beta-trypsin and alpha-chymotrypsin with dissociation constants of 0.35 nM and 40 nM respectively. Inhibits factor XIa, but not other enzymes involved in coagulation and fibrinolysis. Does not inhibit subtilisin, lysyl endopeptidase, arginyl endopeptidase or papain.</text>
</comment>
<comment type="biophysicochemical properties">
    <phDependence>
        <text evidence="1">Inactive at pH 2.0, activity is restored after 10 minutes incubation at pH 8.0.</text>
    </phDependence>
</comment>
<comment type="mass spectrometry" mass="15999.6" error="0.61" method="Electrospray" evidence="1"/>
<keyword id="KW-0007">Acetylation</keyword>
<keyword id="KW-0903">Direct protein sequencing</keyword>
<keyword id="KW-0646">Protease inhibitor</keyword>
<keyword id="KW-0722">Serine protease inhibitor</keyword>
<sequence length="142" mass="15957">SLETGRYLIHNGNNIVSRNLAEDRSLNPKRIVLLEPTDKIQLTWIIEKSGDEYILNNRGAPTAHIEDHVFALLIHQEGATKWSIEAVPRHGRNAYIIKGSDGKGWVAPDKAGEQIIYRTLIVGPSEPPTFPLNQVFQIIKLE</sequence>
<proteinExistence type="evidence at protein level"/>
<organism>
    <name type="scientific">Lentinula edodes</name>
    <name type="common">Shiitake mushroom</name>
    <name type="synonym">Lentinus edodes</name>
    <dbReference type="NCBI Taxonomy" id="5353"/>
    <lineage>
        <taxon>Eukaryota</taxon>
        <taxon>Fungi</taxon>
        <taxon>Dikarya</taxon>
        <taxon>Basidiomycota</taxon>
        <taxon>Agaricomycotina</taxon>
        <taxon>Agaricomycetes</taxon>
        <taxon>Agaricomycetidae</taxon>
        <taxon>Agaricales</taxon>
        <taxon>Marasmiineae</taxon>
        <taxon>Omphalotaceae</taxon>
        <taxon>Lentinula</taxon>
    </lineage>
</organism>
<name>SPI_LENED</name>
<reference evidence="2" key="1">
    <citation type="journal article" date="1999" name="Eur. J. Biochem.">
        <title>The inhibitory properties and primary structure of a novel serine proteinase inhibitor from the fruiting body of the basidiomycete, Lentinus edodes.</title>
        <authorList>
            <person name="Odani S."/>
            <person name="Tominaga K."/>
            <person name="Kondou S."/>
            <person name="Hori H."/>
            <person name="Koide T."/>
            <person name="Hara S."/>
            <person name="Isemura M."/>
            <person name="Tsunasawa S."/>
        </authorList>
    </citation>
    <scope>PROTEIN SEQUENCE</scope>
    <scope>FUNCTION</scope>
    <scope>BIOPHYSICOCHEMICAL PROPERTIES</scope>
    <scope>MASS SPECTROMETRY</scope>
    <scope>ACETYLATION AT SER-1</scope>
    <source>
        <tissue evidence="1">Fruiting body</tissue>
    </source>
</reference>
<accession>P81639</accession>
<feature type="chain" id="PRO_0000308184" description="Serine protease inhibitor">
    <location>
        <begin position="1"/>
        <end position="142"/>
    </location>
</feature>
<feature type="modified residue" description="N-acetylserine" evidence="1">
    <location>
        <position position="1"/>
    </location>
</feature>